<organismHost>
    <name type="scientific">Homo sapiens</name>
    <name type="common">Human</name>
    <dbReference type="NCBI Taxonomy" id="9606"/>
</organismHost>
<feature type="chain" id="PRO_0000448185" description="EFC-associated protein OPG053">
    <location>
        <begin position="1"/>
        <end position="212"/>
    </location>
</feature>
<feature type="topological domain" description="Virion surface" evidence="2">
    <location>
        <begin position="1"/>
        <end position="175"/>
    </location>
</feature>
<feature type="transmembrane region" description="Helical" evidence="2">
    <location>
        <begin position="176"/>
        <end position="196"/>
    </location>
</feature>
<feature type="topological domain" description="Intravirion" evidence="2">
    <location>
        <begin position="197"/>
        <end position="212"/>
    </location>
</feature>
<feature type="disulfide bond" description="by OPG088" evidence="1">
    <location>
        <begin position="33"/>
        <end position="55"/>
    </location>
</feature>
<feature type="disulfide bond" description="by OPG088" evidence="1">
    <location>
        <begin position="47"/>
        <end position="127"/>
    </location>
</feature>
<feature type="disulfide bond" description="by OPG088" evidence="1">
    <location>
        <begin position="107"/>
        <end position="149"/>
    </location>
</feature>
<dbReference type="EMBL" id="L22579">
    <property type="protein sequence ID" value="AAA60781.1"/>
    <property type="molecule type" value="Genomic_DNA"/>
</dbReference>
<dbReference type="EMBL" id="U18340">
    <property type="protein sequence ID" value="AAA69444.1"/>
    <property type="molecule type" value="Genomic_DNA"/>
</dbReference>
<dbReference type="EMBL" id="U18337">
    <property type="protein sequence ID" value="AAA69338.1"/>
    <property type="molecule type" value="Genomic_DNA"/>
</dbReference>
<dbReference type="EMBL" id="U18338">
    <property type="protein sequence ID" value="AAA69379.1"/>
    <property type="molecule type" value="Genomic_DNA"/>
</dbReference>
<dbReference type="PIR" id="G72154">
    <property type="entry name" value="G72154"/>
</dbReference>
<dbReference type="PIR" id="T28471">
    <property type="entry name" value="T28471"/>
</dbReference>
<dbReference type="RefSeq" id="NP_042077.1">
    <property type="nucleotide sequence ID" value="NC_001611.1"/>
</dbReference>
<dbReference type="SMR" id="P0DSZ4"/>
<dbReference type="GeneID" id="1486569"/>
<dbReference type="KEGG" id="vg:1486569"/>
<dbReference type="Proteomes" id="UP000119805">
    <property type="component" value="Segment"/>
</dbReference>
<dbReference type="GO" id="GO:0016020">
    <property type="term" value="C:membrane"/>
    <property type="evidence" value="ECO:0007669"/>
    <property type="project" value="UniProtKB-KW"/>
</dbReference>
<dbReference type="GO" id="GO:0019031">
    <property type="term" value="C:viral envelope"/>
    <property type="evidence" value="ECO:0007669"/>
    <property type="project" value="UniProtKB-KW"/>
</dbReference>
<dbReference type="GO" id="GO:0055036">
    <property type="term" value="C:virion membrane"/>
    <property type="evidence" value="ECO:0007669"/>
    <property type="project" value="UniProtKB-SubCell"/>
</dbReference>
<dbReference type="InterPro" id="IPR003472">
    <property type="entry name" value="Virion_mem_poxvirus_L1"/>
</dbReference>
<dbReference type="Pfam" id="PF02442">
    <property type="entry name" value="L1R_F9L"/>
    <property type="match status" value="1"/>
</dbReference>
<proteinExistence type="inferred from homology"/>
<comment type="function">
    <text evidence="1">Component of the entry fusion complex (EFC), which consists of 11 proteins. During cell infection, this complex mediates entry of the virion core into the host cytoplasm by a two-step mechanism consisting of lipid mixing of the viral and cellular membranes and subsequent pore formation.</text>
</comment>
<comment type="subunit">
    <text evidence="1">Component of the entry fusion complex (EFC) composed of OPG053, OPG076, OPG086, OPG094, OPG095, OPG099, OPG107, OPG143, OPG104, OPG147 and OPG155. Except for OPG095 and OPG052, each of the EFC proteins is required for assembly or stability of the complex.</text>
</comment>
<comment type="subcellular location">
    <subcellularLocation>
        <location evidence="1">Virion membrane</location>
        <topology evidence="1">Single-pass membrane protein</topology>
    </subcellularLocation>
    <text evidence="1">Component of the mature virion (MV) membrane.</text>
</comment>
<comment type="PTM">
    <text evidence="1">Disulfid bonds are oxidized in the cytoplasm by OPG088 protein.</text>
</comment>
<comment type="PTM">
    <text evidence="1">Unglycosylated because produced in viral factories instead of the classic ER -Golgi route.</text>
</comment>
<comment type="similarity">
    <text evidence="3">Belongs to the orthopoxvirus OPG053 family.</text>
</comment>
<protein>
    <recommendedName>
        <fullName>EFC-associated protein OPG053</fullName>
    </recommendedName>
    <alternativeName>
        <fullName>Protein F9</fullName>
    </alternativeName>
</protein>
<keyword id="KW-1015">Disulfide bond</keyword>
<keyword id="KW-0426">Late protein</keyword>
<keyword id="KW-0472">Membrane</keyword>
<keyword id="KW-0812">Transmembrane</keyword>
<keyword id="KW-1133">Transmembrane helix</keyword>
<keyword id="KW-0261">Viral envelope protein</keyword>
<keyword id="KW-0946">Virion</keyword>
<name>PG053_VARV</name>
<accession>P0DSZ4</accession>
<accession>P33869</accession>
<organism>
    <name type="scientific">Variola virus</name>
    <dbReference type="NCBI Taxonomy" id="10255"/>
    <lineage>
        <taxon>Viruses</taxon>
        <taxon>Varidnaviria</taxon>
        <taxon>Bamfordvirae</taxon>
        <taxon>Nucleocytoviricota</taxon>
        <taxon>Pokkesviricetes</taxon>
        <taxon>Chitovirales</taxon>
        <taxon>Poxviridae</taxon>
        <taxon>Chordopoxvirinae</taxon>
        <taxon>Orthopoxvirus</taxon>
    </lineage>
</organism>
<evidence type="ECO:0000250" key="1">
    <source>
        <dbReference type="UniProtKB" id="P24361"/>
    </source>
</evidence>
<evidence type="ECO:0000255" key="2"/>
<evidence type="ECO:0000305" key="3"/>
<gene>
    <name type="primary">OPG053</name>
    <name type="ORF">C13L</name>
    <name type="ORF">F9L</name>
</gene>
<reference key="1">
    <citation type="journal article" date="1993" name="Nature">
        <title>Potential virulence determinants in terminal regions of variola smallpox virus genome.</title>
        <authorList>
            <person name="Massung R.F."/>
            <person name="Esposito J.J."/>
            <person name="Liu L.I."/>
            <person name="Qi J."/>
            <person name="Utterback T.R."/>
            <person name="Knight J.C."/>
            <person name="Aubin L."/>
            <person name="Yuran T.E."/>
            <person name="Parsons J.M."/>
            <person name="Loparev V.N."/>
            <person name="Selivanov N.A."/>
            <person name="Cavallaro K.F."/>
            <person name="Kerlavage A.R."/>
            <person name="Mahy B.W.J."/>
            <person name="Venter J.C."/>
        </authorList>
    </citation>
    <scope>NUCLEOTIDE SEQUENCE [GENOMIC DNA]</scope>
    <source>
        <strain>Bangladesh-1975</strain>
    </source>
</reference>
<reference key="2">
    <citation type="submission" date="1994-12" db="EMBL/GenBank/DDBJ databases">
        <authorList>
            <person name="Massung R.F."/>
            <person name="Loparev V.N."/>
            <person name="Knight J.C."/>
            <person name="Chizhikov V.E."/>
            <person name="Parsons J.M."/>
            <person name="Totmenin A.V."/>
            <person name="Shchelkunov S.N."/>
            <person name="Esposito J.J."/>
        </authorList>
    </citation>
    <scope>NUCLEOTIDE SEQUENCE [GENOMIC DNA]</scope>
    <source>
        <strain>Congo-1965</strain>
        <strain>Garcia-1966</strain>
        <strain>Somalia-1977</strain>
    </source>
</reference>
<sequence length="212" mass="23746">MAETKEFKTLYNLFIDSYLQKLAQHSIPTNVTCAIHIGEVIGQFKNCALRITNKCMSNTRLSFTLMVESFIEVISLLPEKDRRAIAEEIGIDLNDVPSAVSKLEKNCNAYAEVNNIIDIQKLNIGECSAPPGQHMLLQIVNTGSAGANCGLQTILKSLNKIYVPPIIENRLPYYDPWFLVGVAIILVIFTVAICSIRRNLALKYRYGTFLYV</sequence>